<protein>
    <recommendedName>
        <fullName>Putative malic acid transport protein</fullName>
    </recommendedName>
    <alternativeName>
        <fullName>Malate permease</fullName>
    </alternativeName>
</protein>
<proteinExistence type="inferred from homology"/>
<reference key="1">
    <citation type="journal article" date="2002" name="Nature">
        <title>The genome sequence of Schizosaccharomyces pombe.</title>
        <authorList>
            <person name="Wood V."/>
            <person name="Gwilliam R."/>
            <person name="Rajandream M.A."/>
            <person name="Lyne M.H."/>
            <person name="Lyne R."/>
            <person name="Stewart A."/>
            <person name="Sgouros J.G."/>
            <person name="Peat N."/>
            <person name="Hayles J."/>
            <person name="Baker S.G."/>
            <person name="Basham D."/>
            <person name="Bowman S."/>
            <person name="Brooks K."/>
            <person name="Brown D."/>
            <person name="Brown S."/>
            <person name="Chillingworth T."/>
            <person name="Churcher C.M."/>
            <person name="Collins M."/>
            <person name="Connor R."/>
            <person name="Cronin A."/>
            <person name="Davis P."/>
            <person name="Feltwell T."/>
            <person name="Fraser A."/>
            <person name="Gentles S."/>
            <person name="Goble A."/>
            <person name="Hamlin N."/>
            <person name="Harris D.E."/>
            <person name="Hidalgo J."/>
            <person name="Hodgson G."/>
            <person name="Holroyd S."/>
            <person name="Hornsby T."/>
            <person name="Howarth S."/>
            <person name="Huckle E.J."/>
            <person name="Hunt S."/>
            <person name="Jagels K."/>
            <person name="James K.D."/>
            <person name="Jones L."/>
            <person name="Jones M."/>
            <person name="Leather S."/>
            <person name="McDonald S."/>
            <person name="McLean J."/>
            <person name="Mooney P."/>
            <person name="Moule S."/>
            <person name="Mungall K.L."/>
            <person name="Murphy L.D."/>
            <person name="Niblett D."/>
            <person name="Odell C."/>
            <person name="Oliver K."/>
            <person name="O'Neil S."/>
            <person name="Pearson D."/>
            <person name="Quail M.A."/>
            <person name="Rabbinowitsch E."/>
            <person name="Rutherford K.M."/>
            <person name="Rutter S."/>
            <person name="Saunders D."/>
            <person name="Seeger K."/>
            <person name="Sharp S."/>
            <person name="Skelton J."/>
            <person name="Simmonds M.N."/>
            <person name="Squares R."/>
            <person name="Squares S."/>
            <person name="Stevens K."/>
            <person name="Taylor K."/>
            <person name="Taylor R.G."/>
            <person name="Tivey A."/>
            <person name="Walsh S.V."/>
            <person name="Warren T."/>
            <person name="Whitehead S."/>
            <person name="Woodward J.R."/>
            <person name="Volckaert G."/>
            <person name="Aert R."/>
            <person name="Robben J."/>
            <person name="Grymonprez B."/>
            <person name="Weltjens I."/>
            <person name="Vanstreels E."/>
            <person name="Rieger M."/>
            <person name="Schaefer M."/>
            <person name="Mueller-Auer S."/>
            <person name="Gabel C."/>
            <person name="Fuchs M."/>
            <person name="Duesterhoeft A."/>
            <person name="Fritzc C."/>
            <person name="Holzer E."/>
            <person name="Moestl D."/>
            <person name="Hilbert H."/>
            <person name="Borzym K."/>
            <person name="Langer I."/>
            <person name="Beck A."/>
            <person name="Lehrach H."/>
            <person name="Reinhardt R."/>
            <person name="Pohl T.M."/>
            <person name="Eger P."/>
            <person name="Zimmermann W."/>
            <person name="Wedler H."/>
            <person name="Wambutt R."/>
            <person name="Purnelle B."/>
            <person name="Goffeau A."/>
            <person name="Cadieu E."/>
            <person name="Dreano S."/>
            <person name="Gloux S."/>
            <person name="Lelaure V."/>
            <person name="Mottier S."/>
            <person name="Galibert F."/>
            <person name="Aves S.J."/>
            <person name="Xiang Z."/>
            <person name="Hunt C."/>
            <person name="Moore K."/>
            <person name="Hurst S.M."/>
            <person name="Lucas M."/>
            <person name="Rochet M."/>
            <person name="Gaillardin C."/>
            <person name="Tallada V.A."/>
            <person name="Garzon A."/>
            <person name="Thode G."/>
            <person name="Daga R.R."/>
            <person name="Cruzado L."/>
            <person name="Jimenez J."/>
            <person name="Sanchez M."/>
            <person name="del Rey F."/>
            <person name="Benito J."/>
            <person name="Dominguez A."/>
            <person name="Revuelta J.L."/>
            <person name="Moreno S."/>
            <person name="Armstrong J."/>
            <person name="Forsburg S.L."/>
            <person name="Cerutti L."/>
            <person name="Lowe T."/>
            <person name="McCombie W.R."/>
            <person name="Paulsen I."/>
            <person name="Potashkin J."/>
            <person name="Shpakovski G.V."/>
            <person name="Ussery D."/>
            <person name="Barrell B.G."/>
            <person name="Nurse P."/>
        </authorList>
    </citation>
    <scope>NUCLEOTIDE SEQUENCE [LARGE SCALE GENOMIC DNA]</scope>
    <source>
        <strain>972 / ATCC 24843</strain>
    </source>
</reference>
<evidence type="ECO:0000255" key="1"/>
<evidence type="ECO:0000256" key="2">
    <source>
        <dbReference type="SAM" id="MobiDB-lite"/>
    </source>
</evidence>
<evidence type="ECO:0000305" key="3"/>
<sequence>MDIVKQRYHELFDLRVRGPRMKMADRLEHFTWAWFASAMGTGGIGMVTSLYHFRFYGLNTLGKIIFIFQLSILTLYICCITFRFIRYPGTLSKTWKNPSEVLFMPTALLAIATSISNLYPYAFPYTGEWMVWLIRILYWIFVAVACIFVISLFYSLFHAHPFRINTIIPALVLPIFPCMICGVIASAIVESQPARQAKNMVVAGIAFQGLGFWIYIIVYAVNMCRFFTVGLQPAADRPGMFILVSPPSFTGLTLLDLAFGAKAKRPYIFVGDNSSEYLEFVATFMALFMIGLGIFNFCLAFVSVVAGFCTRQRIKFKVSWFAMIFANVGLVMDVQELGRAIDSKAVCIVGQVCGVTITIVWIILILLTLRAVYVQELLYPGKDEDIDTILPNVLEYYRHLEEEEKDEAERSKRKAEESDGKTTRELTSGGL</sequence>
<comment type="subcellular location">
    <subcellularLocation>
        <location evidence="3">Membrane</location>
        <topology evidence="3">Multi-pass membrane protein</topology>
    </subcellularLocation>
</comment>
<comment type="similarity">
    <text evidence="3">Belongs to the tellurite-resistance/dicarboxylate transporter (TDT) family.</text>
</comment>
<gene>
    <name type="ORF">SPCC794.06</name>
</gene>
<feature type="chain" id="PRO_0000310766" description="Putative malic acid transport protein">
    <location>
        <begin position="1"/>
        <end position="431"/>
    </location>
</feature>
<feature type="transmembrane region" description="Helical" evidence="1">
    <location>
        <begin position="30"/>
        <end position="50"/>
    </location>
</feature>
<feature type="transmembrane region" description="Helical" evidence="1">
    <location>
        <begin position="62"/>
        <end position="82"/>
    </location>
</feature>
<feature type="transmembrane region" description="Helical" evidence="1">
    <location>
        <begin position="101"/>
        <end position="121"/>
    </location>
</feature>
<feature type="transmembrane region" description="Helical" evidence="1">
    <location>
        <begin position="136"/>
        <end position="156"/>
    </location>
</feature>
<feature type="transmembrane region" description="Helical" evidence="1">
    <location>
        <begin position="167"/>
        <end position="187"/>
    </location>
</feature>
<feature type="transmembrane region" description="Helical" evidence="1">
    <location>
        <begin position="201"/>
        <end position="221"/>
    </location>
</feature>
<feature type="transmembrane region" description="Helical" evidence="1">
    <location>
        <begin position="239"/>
        <end position="259"/>
    </location>
</feature>
<feature type="transmembrane region" description="Helical" evidence="1">
    <location>
        <begin position="284"/>
        <end position="304"/>
    </location>
</feature>
<feature type="transmembrane region" description="Helical" evidence="1">
    <location>
        <begin position="318"/>
        <end position="338"/>
    </location>
</feature>
<feature type="transmembrane region" description="Helical" evidence="1">
    <location>
        <begin position="346"/>
        <end position="366"/>
    </location>
</feature>
<feature type="region of interest" description="Disordered" evidence="2">
    <location>
        <begin position="402"/>
        <end position="431"/>
    </location>
</feature>
<feature type="compositionally biased region" description="Basic and acidic residues" evidence="2">
    <location>
        <begin position="402"/>
        <end position="424"/>
    </location>
</feature>
<organism>
    <name type="scientific">Schizosaccharomyces pombe (strain 972 / ATCC 24843)</name>
    <name type="common">Fission yeast</name>
    <dbReference type="NCBI Taxonomy" id="284812"/>
    <lineage>
        <taxon>Eukaryota</taxon>
        <taxon>Fungi</taxon>
        <taxon>Dikarya</taxon>
        <taxon>Ascomycota</taxon>
        <taxon>Taphrinomycotina</taxon>
        <taxon>Schizosaccharomycetes</taxon>
        <taxon>Schizosaccharomycetales</taxon>
        <taxon>Schizosaccharomycetaceae</taxon>
        <taxon>Schizosaccharomyces</taxon>
    </lineage>
</organism>
<name>MAE2_SCHPO</name>
<keyword id="KW-0472">Membrane</keyword>
<keyword id="KW-1185">Reference proteome</keyword>
<keyword id="KW-0812">Transmembrane</keyword>
<keyword id="KW-1133">Transmembrane helix</keyword>
<accession>O59815</accession>
<dbReference type="EMBL" id="CU329672">
    <property type="protein sequence ID" value="CAA19133.1"/>
    <property type="molecule type" value="Genomic_DNA"/>
</dbReference>
<dbReference type="PIR" id="T41614">
    <property type="entry name" value="T41614"/>
</dbReference>
<dbReference type="RefSeq" id="NP_587754.1">
    <property type="nucleotide sequence ID" value="NM_001022747.2"/>
</dbReference>
<dbReference type="SMR" id="O59815"/>
<dbReference type="BioGRID" id="275998">
    <property type="interactions" value="1"/>
</dbReference>
<dbReference type="STRING" id="284812.O59815"/>
<dbReference type="iPTMnet" id="O59815"/>
<dbReference type="PaxDb" id="4896-SPCC794.06.1"/>
<dbReference type="EnsemblFungi" id="SPCC794.06.1">
    <property type="protein sequence ID" value="SPCC794.06.1:pep"/>
    <property type="gene ID" value="SPCC794.06"/>
</dbReference>
<dbReference type="KEGG" id="spo:2539435"/>
<dbReference type="PomBase" id="SPCC794.06"/>
<dbReference type="VEuPathDB" id="FungiDB:SPCC794.06"/>
<dbReference type="eggNOG" id="ENOG502QV03">
    <property type="taxonomic scope" value="Eukaryota"/>
</dbReference>
<dbReference type="HOGENOM" id="CLU_030057_2_0_1"/>
<dbReference type="InParanoid" id="O59815"/>
<dbReference type="OMA" id="IFPCMIC"/>
<dbReference type="PhylomeDB" id="O59815"/>
<dbReference type="PRO" id="PR:O59815"/>
<dbReference type="Proteomes" id="UP000002485">
    <property type="component" value="Chromosome III"/>
</dbReference>
<dbReference type="GO" id="GO:0016020">
    <property type="term" value="C:membrane"/>
    <property type="evidence" value="ECO:0007669"/>
    <property type="project" value="UniProtKB-SubCell"/>
</dbReference>
<dbReference type="GO" id="GO:0015140">
    <property type="term" value="F:malate transmembrane transporter activity"/>
    <property type="evidence" value="ECO:0007669"/>
    <property type="project" value="InterPro"/>
</dbReference>
<dbReference type="GO" id="GO:0022857">
    <property type="term" value="F:transmembrane transporter activity"/>
    <property type="evidence" value="ECO:0000318"/>
    <property type="project" value="GO_Central"/>
</dbReference>
<dbReference type="CDD" id="cd09317">
    <property type="entry name" value="TDT_Mae1_like"/>
    <property type="match status" value="1"/>
</dbReference>
<dbReference type="Gene3D" id="1.50.10.150">
    <property type="entry name" value="Voltage-dependent anion channel"/>
    <property type="match status" value="1"/>
</dbReference>
<dbReference type="InterPro" id="IPR030185">
    <property type="entry name" value="Mae1"/>
</dbReference>
<dbReference type="InterPro" id="IPR004695">
    <property type="entry name" value="SLAC1/Mae1/Ssu1/TehA"/>
</dbReference>
<dbReference type="InterPro" id="IPR038665">
    <property type="entry name" value="Voltage-dep_anion_channel_sf"/>
</dbReference>
<dbReference type="PANTHER" id="PTHR31162">
    <property type="entry name" value="MALIC ACID TRANSPORT PROTEIN-RELATED"/>
    <property type="match status" value="1"/>
</dbReference>
<dbReference type="PANTHER" id="PTHR31162:SF4">
    <property type="entry name" value="MALIC ACID TRANSPORT PROTEIN-RELATED"/>
    <property type="match status" value="1"/>
</dbReference>
<dbReference type="Pfam" id="PF03595">
    <property type="entry name" value="SLAC1"/>
    <property type="match status" value="1"/>
</dbReference>